<name>Y1549_MYCTU</name>
<accession>P9WLU5</accession>
<accession>L0T9Y2</accession>
<accession>Q10777</accession>
<gene>
    <name type="ordered locus">Rv1549</name>
    <name type="ORF">MTCY48.16c</name>
</gene>
<proteinExistence type="predicted"/>
<feature type="chain" id="PRO_0000103878" description="Uncharacterized protein Rv1549">
    <location>
        <begin position="1"/>
        <end position="175"/>
    </location>
</feature>
<keyword id="KW-1185">Reference proteome</keyword>
<organism>
    <name type="scientific">Mycobacterium tuberculosis (strain ATCC 25618 / H37Rv)</name>
    <dbReference type="NCBI Taxonomy" id="83332"/>
    <lineage>
        <taxon>Bacteria</taxon>
        <taxon>Bacillati</taxon>
        <taxon>Actinomycetota</taxon>
        <taxon>Actinomycetes</taxon>
        <taxon>Mycobacteriales</taxon>
        <taxon>Mycobacteriaceae</taxon>
        <taxon>Mycobacterium</taxon>
        <taxon>Mycobacterium tuberculosis complex</taxon>
    </lineage>
</organism>
<sequence>MVAAPCFRVLRLWTYAHRCDLGHTDPLSRRTEMTTTERPTTMCEAFQRTAVMDPDAVALRTPGGNQTMTWRDYAAQVRRVAAGLAGLGVRRGDTVSLMMANRIEFYPLDVGAQHVGATSFSVYNTLPAEQLTYVFDNAGTKVVICEQQYVDRVRASGVPIEHIVCVDGAPPARSR</sequence>
<protein>
    <recommendedName>
        <fullName>Uncharacterized protein Rv1549</fullName>
    </recommendedName>
</protein>
<reference key="1">
    <citation type="journal article" date="1998" name="Nature">
        <title>Deciphering the biology of Mycobacterium tuberculosis from the complete genome sequence.</title>
        <authorList>
            <person name="Cole S.T."/>
            <person name="Brosch R."/>
            <person name="Parkhill J."/>
            <person name="Garnier T."/>
            <person name="Churcher C.M."/>
            <person name="Harris D.E."/>
            <person name="Gordon S.V."/>
            <person name="Eiglmeier K."/>
            <person name="Gas S."/>
            <person name="Barry C.E. III"/>
            <person name="Tekaia F."/>
            <person name="Badcock K."/>
            <person name="Basham D."/>
            <person name="Brown D."/>
            <person name="Chillingworth T."/>
            <person name="Connor R."/>
            <person name="Davies R.M."/>
            <person name="Devlin K."/>
            <person name="Feltwell T."/>
            <person name="Gentles S."/>
            <person name="Hamlin N."/>
            <person name="Holroyd S."/>
            <person name="Hornsby T."/>
            <person name="Jagels K."/>
            <person name="Krogh A."/>
            <person name="McLean J."/>
            <person name="Moule S."/>
            <person name="Murphy L.D."/>
            <person name="Oliver S."/>
            <person name="Osborne J."/>
            <person name="Quail M.A."/>
            <person name="Rajandream M.A."/>
            <person name="Rogers J."/>
            <person name="Rutter S."/>
            <person name="Seeger K."/>
            <person name="Skelton S."/>
            <person name="Squares S."/>
            <person name="Squares R."/>
            <person name="Sulston J.E."/>
            <person name="Taylor K."/>
            <person name="Whitehead S."/>
            <person name="Barrell B.G."/>
        </authorList>
    </citation>
    <scope>NUCLEOTIDE SEQUENCE [LARGE SCALE GENOMIC DNA]</scope>
    <source>
        <strain>ATCC 25618 / H37Rv</strain>
    </source>
</reference>
<dbReference type="EMBL" id="AL123456">
    <property type="protein sequence ID" value="CCP44313.1"/>
    <property type="molecule type" value="Genomic_DNA"/>
</dbReference>
<dbReference type="PIR" id="B70762">
    <property type="entry name" value="B70762"/>
</dbReference>
<dbReference type="SMR" id="P9WLU5"/>
<dbReference type="STRING" id="83332.Rv1549"/>
<dbReference type="PaxDb" id="83332-Rv1549"/>
<dbReference type="KEGG" id="mtv:RVBD_1549"/>
<dbReference type="PATRIC" id="fig|83332.111.peg.1725"/>
<dbReference type="TubercuList" id="Rv1549"/>
<dbReference type="eggNOG" id="COG1022">
    <property type="taxonomic scope" value="Bacteria"/>
</dbReference>
<dbReference type="InParanoid" id="P9WLU5"/>
<dbReference type="PhylomeDB" id="P9WLU5"/>
<dbReference type="Proteomes" id="UP000001584">
    <property type="component" value="Chromosome"/>
</dbReference>
<dbReference type="Gene3D" id="3.40.50.12780">
    <property type="entry name" value="N-terminal domain of ligase-like"/>
    <property type="match status" value="1"/>
</dbReference>
<dbReference type="InterPro" id="IPR000873">
    <property type="entry name" value="AMP-dep_synth/lig_dom"/>
</dbReference>
<dbReference type="InterPro" id="IPR042099">
    <property type="entry name" value="ANL_N_sf"/>
</dbReference>
<dbReference type="InterPro" id="IPR050237">
    <property type="entry name" value="ATP-dep_AMP-bd_enzyme"/>
</dbReference>
<dbReference type="PANTHER" id="PTHR43767">
    <property type="entry name" value="LONG-CHAIN-FATTY-ACID--COA LIGASE"/>
    <property type="match status" value="1"/>
</dbReference>
<dbReference type="PANTHER" id="PTHR43767:SF1">
    <property type="entry name" value="NONRIBOSOMAL PEPTIDE SYNTHASE PES1 (EUROFUNG)-RELATED"/>
    <property type="match status" value="1"/>
</dbReference>
<dbReference type="Pfam" id="PF00501">
    <property type="entry name" value="AMP-binding"/>
    <property type="match status" value="1"/>
</dbReference>
<dbReference type="SUPFAM" id="SSF56801">
    <property type="entry name" value="Acetyl-CoA synthetase-like"/>
    <property type="match status" value="1"/>
</dbReference>